<accession>Q5WD36</accession>
<comment type="subcellular location">
    <subcellularLocation>
        <location evidence="1">Spore core</location>
    </subcellularLocation>
</comment>
<comment type="induction">
    <text evidence="1">Expressed only in the forespore compartment of sporulating cells.</text>
</comment>
<comment type="similarity">
    <text evidence="1">Belongs to the Tlp family.</text>
</comment>
<feature type="chain" id="PRO_0000221501" description="Small, acid-soluble spore protein Tlp">
    <location>
        <begin position="1"/>
        <end position="76"/>
    </location>
</feature>
<feature type="region of interest" description="Disordered" evidence="2">
    <location>
        <begin position="1"/>
        <end position="76"/>
    </location>
</feature>
<feature type="compositionally biased region" description="Basic and acidic residues" evidence="2">
    <location>
        <begin position="1"/>
        <end position="15"/>
    </location>
</feature>
<feature type="compositionally biased region" description="Basic and acidic residues" evidence="2">
    <location>
        <begin position="26"/>
        <end position="38"/>
    </location>
</feature>
<feature type="compositionally biased region" description="Basic and acidic residues" evidence="2">
    <location>
        <begin position="46"/>
        <end position="76"/>
    </location>
</feature>
<reference key="1">
    <citation type="submission" date="2003-10" db="EMBL/GenBank/DDBJ databases">
        <title>The complete genome sequence of the alkaliphilic Bacillus clausii KSM-K16.</title>
        <authorList>
            <person name="Takaki Y."/>
            <person name="Kageyama Y."/>
            <person name="Shimamura S."/>
            <person name="Suzuki H."/>
            <person name="Nishi S."/>
            <person name="Hatada Y."/>
            <person name="Kawai S."/>
            <person name="Ito S."/>
            <person name="Horikoshi K."/>
        </authorList>
    </citation>
    <scope>NUCLEOTIDE SEQUENCE [LARGE SCALE GENOMIC DNA]</scope>
    <source>
        <strain>KSM-K16</strain>
    </source>
</reference>
<proteinExistence type="inferred from homology"/>
<sequence length="76" mass="9003">MAKRDDRSNNPERIENIIGNTLQNMDEARDYAKAHSEELSEEEKQEIEQKNERREQSIDGLREELKDEVNDQKNNS</sequence>
<keyword id="KW-1185">Reference proteome</keyword>
<keyword id="KW-0749">Sporulation</keyword>
<dbReference type="EMBL" id="AP006627">
    <property type="protein sequence ID" value="BAD65724.1"/>
    <property type="molecule type" value="Genomic_DNA"/>
</dbReference>
<dbReference type="RefSeq" id="WP_011248032.1">
    <property type="nucleotide sequence ID" value="NC_006582.1"/>
</dbReference>
<dbReference type="SMR" id="Q5WD36"/>
<dbReference type="STRING" id="66692.ABC3190"/>
<dbReference type="KEGG" id="bcl:ABC3190"/>
<dbReference type="eggNOG" id="ENOG5032ZH6">
    <property type="taxonomic scope" value="Bacteria"/>
</dbReference>
<dbReference type="HOGENOM" id="CLU_178266_0_0_9"/>
<dbReference type="OrthoDB" id="1799076at2"/>
<dbReference type="Proteomes" id="UP000001168">
    <property type="component" value="Chromosome"/>
</dbReference>
<dbReference type="GO" id="GO:0030436">
    <property type="term" value="P:asexual sporulation"/>
    <property type="evidence" value="ECO:0007669"/>
    <property type="project" value="UniProtKB-UniRule"/>
</dbReference>
<dbReference type="GO" id="GO:0030435">
    <property type="term" value="P:sporulation resulting in formation of a cellular spore"/>
    <property type="evidence" value="ECO:0007669"/>
    <property type="project" value="UniProtKB-KW"/>
</dbReference>
<dbReference type="HAMAP" id="MF_01506">
    <property type="entry name" value="Tlp"/>
    <property type="match status" value="1"/>
</dbReference>
<dbReference type="InterPro" id="IPR017524">
    <property type="entry name" value="SASP_thioredoxin-like"/>
</dbReference>
<dbReference type="NCBIfam" id="TIGR03090">
    <property type="entry name" value="SASP_tlp"/>
    <property type="match status" value="1"/>
</dbReference>
<dbReference type="Pfam" id="PF19824">
    <property type="entry name" value="Tlp"/>
    <property type="match status" value="1"/>
</dbReference>
<organism>
    <name type="scientific">Shouchella clausii (strain KSM-K16)</name>
    <name type="common">Alkalihalobacillus clausii</name>
    <dbReference type="NCBI Taxonomy" id="66692"/>
    <lineage>
        <taxon>Bacteria</taxon>
        <taxon>Bacillati</taxon>
        <taxon>Bacillota</taxon>
        <taxon>Bacilli</taxon>
        <taxon>Bacillales</taxon>
        <taxon>Bacillaceae</taxon>
        <taxon>Shouchella</taxon>
    </lineage>
</organism>
<protein>
    <recommendedName>
        <fullName evidence="1">Small, acid-soluble spore protein Tlp</fullName>
    </recommendedName>
</protein>
<evidence type="ECO:0000255" key="1">
    <source>
        <dbReference type="HAMAP-Rule" id="MF_01506"/>
    </source>
</evidence>
<evidence type="ECO:0000256" key="2">
    <source>
        <dbReference type="SAM" id="MobiDB-lite"/>
    </source>
</evidence>
<gene>
    <name evidence="1" type="primary">tlp</name>
    <name type="ordered locus">ABC3190</name>
</gene>
<name>TLP_SHOC1</name>